<name>DPOL_ELHVK</name>
<comment type="function">
    <text evidence="1">Replicates viral genomic DNA. The replication complex is composed of six viral proteins: the DNA polymerase, processivity factor, primase, primase-associated factor, helicase, and ssDNA-binding protein. Additionally, the polymerase contains an intrinsic ribonuclease H (RNase H) activity that specifically degrades RNA/DNA heteroduplexes or duplex DNA substrates in the 5' to 3' direction. Therefore, it can catalyze the excision of the RNA primers that initiate the synthesis of Okazaki fragments at a replication fork during viral DNA replication (By similarity).</text>
</comment>
<comment type="catalytic activity">
    <reaction>
        <text>DNA(n) + a 2'-deoxyribonucleoside 5'-triphosphate = DNA(n+1) + diphosphate</text>
        <dbReference type="Rhea" id="RHEA:22508"/>
        <dbReference type="Rhea" id="RHEA-COMP:17339"/>
        <dbReference type="Rhea" id="RHEA-COMP:17340"/>
        <dbReference type="ChEBI" id="CHEBI:33019"/>
        <dbReference type="ChEBI" id="CHEBI:61560"/>
        <dbReference type="ChEBI" id="CHEBI:173112"/>
        <dbReference type="EC" id="2.7.7.7"/>
    </reaction>
</comment>
<comment type="catalytic activity">
    <reaction>
        <text>Endonucleolytic cleavage to 5'-phosphomonoester.</text>
        <dbReference type="EC" id="3.1.26.4"/>
    </reaction>
</comment>
<comment type="subcellular location">
    <subcellularLocation>
        <location evidence="3">Host nucleus</location>
    </subcellularLocation>
    <text evidence="1">The protein is present at discrete sites in nuclei, called replication compartments where viral DNA replication occurs.</text>
</comment>
<comment type="similarity">
    <text evidence="3">Belongs to the DNA polymerase type-B family.</text>
</comment>
<organism>
    <name type="scientific">Elephantid herpesvirus 1 (isolate Asian elephant/Berlin/Kiba/1998)</name>
    <name type="common">EIHV-1</name>
    <name type="synonym">Elephant endotheliotropic herpesvirus</name>
    <dbReference type="NCBI Taxonomy" id="654902"/>
    <lineage>
        <taxon>Viruses</taxon>
        <taxon>Duplodnaviria</taxon>
        <taxon>Heunggongvirae</taxon>
        <taxon>Peploviricota</taxon>
        <taxon>Herviviricetes</taxon>
        <taxon>Herpesvirales</taxon>
        <taxon>Orthoherpesviridae</taxon>
        <taxon>Betaherpesvirinae</taxon>
        <taxon>Proboscivirus</taxon>
        <taxon>Proboscivirus elephantidbeta1</taxon>
        <taxon>Elephantid herpesvirus 1</taxon>
    </lineage>
</organism>
<accession>Q9DKT8</accession>
<sequence>MAFFNPYFKSKNKGSDMPPKQSMSFTKQHKTKESAFLSITPECIIKPKSSKLLKKYNGEQPRLFYNGEPVLLYTVREISQWPVKDIMKVNNGTVDGSCNVVSTSHEPDSPVKNNCEETVVFHIYEQCVFCAHDVSYEYLPWRYKRFLSPTGTIISLIGKTEDGTDVCVNVHGQAYYFYVAMKDEAATRDAVSKVMSNLEKESSSCSYVMKSVNKMSLMGFNTNTSSYLMMIFSNHFVGKEAARNLKDLDFEIFEHLVEPNTRFLVDNEFCSFGWYSLKTPYVRQTSKDSNCELELDCCVGDLQVLRDRVDWPNYKCMAFDIECLSGSVDDAFPDATNPDDIIIQISCVCFDIKNTIETQHLFTLGSCAEIPGVYIYECASEYELIESFLTFVRVYGPNFITGYNINAFDIPYVIGRCRYYNIQCGAFTKMKRGRMTCFKGMESFLNRCQCKVTISGIVIIDMYRVCMDKVSAPNHKLDTVVDMLLGEKKHSVSYKQIPVLFRRDDDGRAVVGAYCVHDSVLVHKLFCKLLFHYEASAIARLSNISINKVVFDGQQSRIFTCMLAAARREGLIIPSIDEAGEDTYQGATVLEPKTGFYNTPVAVFDFASLYPSIIQAYNLCYCTLITDNYVASLREEDITMVTTNTGRVHRFVKPHVRKSILSQLLTSWLAERKAVREKLKHCKDPLMQILLDKQQLALKLTCNAVYGFTGVSKGMFPCLAIAESVTAQGRQLLAVTKQYICDRFNDWTFLTQIAPELVDCPVDSNRFKIDVVYGDTDSVFVLLCGIENADRLYSALPNFVAHITKTLFPPPIKLEVDKVFEKLLLLCKKRYVGVLHGEEKLSMKGIDLVRRNVCGFVKNTTLAVIKSLFSDNVISEAVQKMSGMTQDQVCKEGLPPGFFKLVALITDARERLYENRVDIHELQLSATLTQACDKYKQQNLPHLTVVRKKLERREEIPNTGDRIFYVLLAHPDERVANYVIAEDPDYVETHRLQINCSKYFSNLISSITHSISPIFPEFISKPDRFLMSCVPRKTYPKPILN</sequence>
<organismHost>
    <name type="scientific">Elephas maximus</name>
    <name type="common">Indian elephant</name>
    <dbReference type="NCBI Taxonomy" id="9783"/>
</organismHost>
<organismHost>
    <name type="scientific">Loxodonta africana</name>
    <name type="common">African elephant</name>
    <dbReference type="NCBI Taxonomy" id="9785"/>
</organismHost>
<organismHost>
    <name type="scientific">Loxodonta cyclotis</name>
    <name type="common">African forest elephant</name>
    <dbReference type="NCBI Taxonomy" id="99490"/>
</organismHost>
<feature type="chain" id="PRO_0000408152" description="DNA polymerase catalytic subunit">
    <location>
        <begin position="1"/>
        <end position="1041"/>
    </location>
</feature>
<feature type="region of interest" description="Disordered" evidence="2">
    <location>
        <begin position="1"/>
        <end position="23"/>
    </location>
</feature>
<keyword id="KW-0235">DNA replication</keyword>
<keyword id="KW-0238">DNA-binding</keyword>
<keyword id="KW-0239">DNA-directed DNA polymerase</keyword>
<keyword id="KW-0255">Endonuclease</keyword>
<keyword id="KW-1048">Host nucleus</keyword>
<keyword id="KW-0378">Hydrolase</keyword>
<keyword id="KW-0511">Multifunctional enzyme</keyword>
<keyword id="KW-0540">Nuclease</keyword>
<keyword id="KW-0548">Nucleotidyltransferase</keyword>
<keyword id="KW-0808">Transferase</keyword>
<keyword id="KW-1194">Viral DNA replication</keyword>
<reference key="1">
    <citation type="journal article" date="2007" name="J. Virol.">
        <title>Identification of novel rodent herpesviruses, including the first gammaherpesvirus of Mus musculus.</title>
        <authorList>
            <person name="Ehlers B."/>
            <person name="Kuchler J."/>
            <person name="Yasmum N."/>
            <person name="Dural G."/>
            <person name="Voigt S."/>
            <person name="Schmidt-Chanasit J."/>
            <person name="Jakel T."/>
            <person name="Matuschka F.R."/>
            <person name="Richter D."/>
            <person name="Essbauer S."/>
            <person name="Hughes D.J."/>
            <person name="Summers C."/>
            <person name="Bennett M."/>
            <person name="Stewart J.P."/>
            <person name="Ulrich R.G."/>
        </authorList>
    </citation>
    <scope>NUCLEOTIDE SEQUENCE [GENOMIC DNA]</scope>
</reference>
<reference key="2">
    <citation type="journal article" date="2001" name="J. Gen. Virol.">
        <title>Genetic and ultrastructural characterization of a European isolate of the fatal endotheliotropic elephant herpesvirus.</title>
        <authorList>
            <person name="Ehlers B."/>
            <person name="Burkhardt S."/>
            <person name="Goltz M."/>
            <person name="Bergmann V."/>
            <person name="Ochs A."/>
            <person name="Weiler H."/>
            <person name="Hentschke J."/>
        </authorList>
    </citation>
    <scope>NUCLEOTIDE SEQUENCE [GENOMIC DNA]</scope>
</reference>
<proteinExistence type="inferred from homology"/>
<protein>
    <recommendedName>
        <fullName>DNA polymerase catalytic subunit</fullName>
        <ecNumber>2.7.7.7</ecNumber>
        <ecNumber>3.1.26.4</ecNumber>
    </recommendedName>
</protein>
<dbReference type="EC" id="2.7.7.7"/>
<dbReference type="EC" id="3.1.26.4"/>
<dbReference type="EMBL" id="AF322977">
    <property type="protein sequence ID" value="AAG41999.1"/>
    <property type="molecule type" value="Genomic_DNA"/>
</dbReference>
<dbReference type="SMR" id="Q9DKT8"/>
<dbReference type="GO" id="GO:0042025">
    <property type="term" value="C:host cell nucleus"/>
    <property type="evidence" value="ECO:0007669"/>
    <property type="project" value="UniProtKB-SubCell"/>
</dbReference>
<dbReference type="GO" id="GO:0003677">
    <property type="term" value="F:DNA binding"/>
    <property type="evidence" value="ECO:0007669"/>
    <property type="project" value="UniProtKB-KW"/>
</dbReference>
<dbReference type="GO" id="GO:0003887">
    <property type="term" value="F:DNA-directed DNA polymerase activity"/>
    <property type="evidence" value="ECO:0007669"/>
    <property type="project" value="UniProtKB-KW"/>
</dbReference>
<dbReference type="GO" id="GO:0000166">
    <property type="term" value="F:nucleotide binding"/>
    <property type="evidence" value="ECO:0007669"/>
    <property type="project" value="InterPro"/>
</dbReference>
<dbReference type="GO" id="GO:0004523">
    <property type="term" value="F:RNA-DNA hybrid ribonuclease activity"/>
    <property type="evidence" value="ECO:0007669"/>
    <property type="project" value="UniProtKB-EC"/>
</dbReference>
<dbReference type="GO" id="GO:0006261">
    <property type="term" value="P:DNA-templated DNA replication"/>
    <property type="evidence" value="ECO:0007669"/>
    <property type="project" value="TreeGrafter"/>
</dbReference>
<dbReference type="GO" id="GO:0039693">
    <property type="term" value="P:viral DNA genome replication"/>
    <property type="evidence" value="ECO:0007669"/>
    <property type="project" value="UniProtKB-KW"/>
</dbReference>
<dbReference type="Gene3D" id="1.10.132.60">
    <property type="entry name" value="DNA polymerase family B, C-terminal domain"/>
    <property type="match status" value="1"/>
</dbReference>
<dbReference type="Gene3D" id="3.30.342.10">
    <property type="entry name" value="DNA Polymerase, chain B, domain 1"/>
    <property type="match status" value="1"/>
</dbReference>
<dbReference type="Gene3D" id="1.10.287.690">
    <property type="entry name" value="Helix hairpin bin"/>
    <property type="match status" value="1"/>
</dbReference>
<dbReference type="Gene3D" id="3.90.1600.10">
    <property type="entry name" value="Palm domain of DNA polymerase"/>
    <property type="match status" value="1"/>
</dbReference>
<dbReference type="Gene3D" id="3.30.420.10">
    <property type="entry name" value="Ribonuclease H-like superfamily/Ribonuclease H"/>
    <property type="match status" value="1"/>
</dbReference>
<dbReference type="InterPro" id="IPR006172">
    <property type="entry name" value="DNA-dir_DNA_pol_B"/>
</dbReference>
<dbReference type="InterPro" id="IPR017964">
    <property type="entry name" value="DNA-dir_DNA_pol_B_CS"/>
</dbReference>
<dbReference type="InterPro" id="IPR006133">
    <property type="entry name" value="DNA-dir_DNA_pol_B_exonuc"/>
</dbReference>
<dbReference type="InterPro" id="IPR006134">
    <property type="entry name" value="DNA-dir_DNA_pol_B_multi_dom"/>
</dbReference>
<dbReference type="InterPro" id="IPR043502">
    <property type="entry name" value="DNA/RNA_pol_sf"/>
</dbReference>
<dbReference type="InterPro" id="IPR042087">
    <property type="entry name" value="DNA_pol_B_thumb"/>
</dbReference>
<dbReference type="InterPro" id="IPR023211">
    <property type="entry name" value="DNA_pol_palm_dom_sf"/>
</dbReference>
<dbReference type="InterPro" id="IPR050240">
    <property type="entry name" value="DNA_pol_type-B"/>
</dbReference>
<dbReference type="InterPro" id="IPR012337">
    <property type="entry name" value="RNaseH-like_sf"/>
</dbReference>
<dbReference type="InterPro" id="IPR036397">
    <property type="entry name" value="RNaseH_sf"/>
</dbReference>
<dbReference type="PANTHER" id="PTHR10322">
    <property type="entry name" value="DNA POLYMERASE CATALYTIC SUBUNIT"/>
    <property type="match status" value="1"/>
</dbReference>
<dbReference type="PANTHER" id="PTHR10322:SF23">
    <property type="entry name" value="DNA POLYMERASE DELTA CATALYTIC SUBUNIT"/>
    <property type="match status" value="1"/>
</dbReference>
<dbReference type="Pfam" id="PF00136">
    <property type="entry name" value="DNA_pol_B"/>
    <property type="match status" value="1"/>
</dbReference>
<dbReference type="Pfam" id="PF03104">
    <property type="entry name" value="DNA_pol_B_exo1"/>
    <property type="match status" value="1"/>
</dbReference>
<dbReference type="PRINTS" id="PR00106">
    <property type="entry name" value="DNAPOLB"/>
</dbReference>
<dbReference type="SMART" id="SM00486">
    <property type="entry name" value="POLBc"/>
    <property type="match status" value="1"/>
</dbReference>
<dbReference type="SUPFAM" id="SSF56672">
    <property type="entry name" value="DNA/RNA polymerases"/>
    <property type="match status" value="1"/>
</dbReference>
<dbReference type="SUPFAM" id="SSF53098">
    <property type="entry name" value="Ribonuclease H-like"/>
    <property type="match status" value="1"/>
</dbReference>
<dbReference type="PROSITE" id="PS00116">
    <property type="entry name" value="DNA_POLYMERASE_B"/>
    <property type="match status" value="1"/>
</dbReference>
<evidence type="ECO:0000250" key="1"/>
<evidence type="ECO:0000256" key="2">
    <source>
        <dbReference type="SAM" id="MobiDB-lite"/>
    </source>
</evidence>
<evidence type="ECO:0000305" key="3"/>